<sequence length="110" mass="13347">MEIEKTNRMNALFEFYAALLTDKQMNYIELYYADDYSLAEIAEEFGVSRQAVYDNIKRTEKILEDYEMKLHMYSDYIVRSQIFDQILERYPKDNFLQEQIEILTSIDNRE</sequence>
<feature type="chain" id="PRO_1000100818" description="UPF0122 protein SPH_1429">
    <location>
        <begin position="1"/>
        <end position="110"/>
    </location>
</feature>
<dbReference type="EMBL" id="CP000936">
    <property type="protein sequence ID" value="ACA37645.1"/>
    <property type="molecule type" value="Genomic_DNA"/>
</dbReference>
<dbReference type="RefSeq" id="WP_000402071.1">
    <property type="nucleotide sequence ID" value="NC_010380.1"/>
</dbReference>
<dbReference type="SMR" id="B1ICA2"/>
<dbReference type="KEGG" id="spv:SPH_1429"/>
<dbReference type="HOGENOM" id="CLU_129218_1_0_9"/>
<dbReference type="Proteomes" id="UP000002163">
    <property type="component" value="Chromosome"/>
</dbReference>
<dbReference type="Gene3D" id="1.10.10.10">
    <property type="entry name" value="Winged helix-like DNA-binding domain superfamily/Winged helix DNA-binding domain"/>
    <property type="match status" value="1"/>
</dbReference>
<dbReference type="HAMAP" id="MF_00245">
    <property type="entry name" value="UPF0122"/>
    <property type="match status" value="1"/>
</dbReference>
<dbReference type="InterPro" id="IPR013324">
    <property type="entry name" value="RNA_pol_sigma_r3/r4-like"/>
</dbReference>
<dbReference type="InterPro" id="IPR007394">
    <property type="entry name" value="UPF0122"/>
</dbReference>
<dbReference type="InterPro" id="IPR054831">
    <property type="entry name" value="UPF0122_fam_protein"/>
</dbReference>
<dbReference type="InterPro" id="IPR036388">
    <property type="entry name" value="WH-like_DNA-bd_sf"/>
</dbReference>
<dbReference type="NCBIfam" id="NF001066">
    <property type="entry name" value="PRK00118.1-1"/>
    <property type="match status" value="1"/>
</dbReference>
<dbReference type="NCBIfam" id="NF001068">
    <property type="entry name" value="PRK00118.1-4"/>
    <property type="match status" value="1"/>
</dbReference>
<dbReference type="NCBIfam" id="NF001070">
    <property type="entry name" value="PRK00118.1-6"/>
    <property type="match status" value="1"/>
</dbReference>
<dbReference type="NCBIfam" id="NF045758">
    <property type="entry name" value="YlxM"/>
    <property type="match status" value="1"/>
</dbReference>
<dbReference type="PANTHER" id="PTHR40083">
    <property type="entry name" value="UPF0122 PROTEIN CBO2450/CLC_2298"/>
    <property type="match status" value="1"/>
</dbReference>
<dbReference type="PANTHER" id="PTHR40083:SF1">
    <property type="entry name" value="UPF0122 PROTEIN YLXM"/>
    <property type="match status" value="1"/>
</dbReference>
<dbReference type="Pfam" id="PF04297">
    <property type="entry name" value="UPF0122"/>
    <property type="match status" value="1"/>
</dbReference>
<dbReference type="SUPFAM" id="SSF88659">
    <property type="entry name" value="Sigma3 and sigma4 domains of RNA polymerase sigma factors"/>
    <property type="match status" value="1"/>
</dbReference>
<evidence type="ECO:0000255" key="1">
    <source>
        <dbReference type="HAMAP-Rule" id="MF_00245"/>
    </source>
</evidence>
<proteinExistence type="inferred from homology"/>
<comment type="function">
    <text evidence="1">Might take part in the signal recognition particle (SRP) pathway. This is inferred from the conservation of its genetic proximity to ftsY/ffh. May be a regulatory protein.</text>
</comment>
<comment type="similarity">
    <text evidence="1">Belongs to the UPF0122 family.</text>
</comment>
<protein>
    <recommendedName>
        <fullName evidence="1">UPF0122 protein SPH_1429</fullName>
    </recommendedName>
</protein>
<gene>
    <name type="ordered locus">SPH_1429</name>
</gene>
<accession>B1ICA2</accession>
<reference key="1">
    <citation type="journal article" date="2010" name="Genome Biol.">
        <title>Structure and dynamics of the pan-genome of Streptococcus pneumoniae and closely related species.</title>
        <authorList>
            <person name="Donati C."/>
            <person name="Hiller N.L."/>
            <person name="Tettelin H."/>
            <person name="Muzzi A."/>
            <person name="Croucher N.J."/>
            <person name="Angiuoli S.V."/>
            <person name="Oggioni M."/>
            <person name="Dunning Hotopp J.C."/>
            <person name="Hu F.Z."/>
            <person name="Riley D.R."/>
            <person name="Covacci A."/>
            <person name="Mitchell T.J."/>
            <person name="Bentley S.D."/>
            <person name="Kilian M."/>
            <person name="Ehrlich G.D."/>
            <person name="Rappuoli R."/>
            <person name="Moxon E.R."/>
            <person name="Masignani V."/>
        </authorList>
    </citation>
    <scope>NUCLEOTIDE SEQUENCE [LARGE SCALE GENOMIC DNA]</scope>
    <source>
        <strain>Hungary19A-6</strain>
    </source>
</reference>
<name>Y1429_STRPI</name>
<organism>
    <name type="scientific">Streptococcus pneumoniae (strain Hungary19A-6)</name>
    <dbReference type="NCBI Taxonomy" id="487214"/>
    <lineage>
        <taxon>Bacteria</taxon>
        <taxon>Bacillati</taxon>
        <taxon>Bacillota</taxon>
        <taxon>Bacilli</taxon>
        <taxon>Lactobacillales</taxon>
        <taxon>Streptococcaceae</taxon>
        <taxon>Streptococcus</taxon>
    </lineage>
</organism>